<name>LECA_DIOVI</name>
<dbReference type="PDB" id="3RRD">
    <property type="method" value="X-ray"/>
    <property type="resolution" value="2.46 A"/>
    <property type="chains" value="A=1-237"/>
</dbReference>
<dbReference type="PDB" id="3RS6">
    <property type="method" value="X-ray"/>
    <property type="resolution" value="1.80 A"/>
    <property type="chains" value="A=1-237"/>
</dbReference>
<dbReference type="PDB" id="5UUY">
    <property type="method" value="X-ray"/>
    <property type="resolution" value="1.88 A"/>
    <property type="chains" value="A=1-237"/>
</dbReference>
<dbReference type="PDBsum" id="3RRD"/>
<dbReference type="PDBsum" id="3RS6"/>
<dbReference type="PDBsum" id="5UUY"/>
<dbReference type="SMR" id="P58907"/>
<dbReference type="UniLectin" id="P58907"/>
<dbReference type="EvolutionaryTrace" id="P58907"/>
<dbReference type="GO" id="GO:0033095">
    <property type="term" value="C:aleurone grain"/>
    <property type="evidence" value="ECO:0007669"/>
    <property type="project" value="UniProtKB-SubCell"/>
</dbReference>
<dbReference type="GO" id="GO:0005773">
    <property type="term" value="C:vacuole"/>
    <property type="evidence" value="ECO:0007669"/>
    <property type="project" value="UniProtKB-KW"/>
</dbReference>
<dbReference type="GO" id="GO:0030246">
    <property type="term" value="F:carbohydrate binding"/>
    <property type="evidence" value="ECO:0000314"/>
    <property type="project" value="UniProtKB"/>
</dbReference>
<dbReference type="GO" id="GO:0005537">
    <property type="term" value="F:D-mannose binding"/>
    <property type="evidence" value="ECO:0007669"/>
    <property type="project" value="UniProtKB-KW"/>
</dbReference>
<dbReference type="GO" id="GO:0046872">
    <property type="term" value="F:metal ion binding"/>
    <property type="evidence" value="ECO:0007669"/>
    <property type="project" value="UniProtKB-KW"/>
</dbReference>
<dbReference type="GO" id="GO:0090729">
    <property type="term" value="F:toxin activity"/>
    <property type="evidence" value="ECO:0007669"/>
    <property type="project" value="UniProtKB-KW"/>
</dbReference>
<dbReference type="FunFam" id="2.60.120.200:FF:000227">
    <property type="entry name" value="Concanavalin-A"/>
    <property type="match status" value="1"/>
</dbReference>
<dbReference type="Gene3D" id="2.60.120.200">
    <property type="match status" value="1"/>
</dbReference>
<dbReference type="InterPro" id="IPR013320">
    <property type="entry name" value="ConA-like_dom_sf"/>
</dbReference>
<dbReference type="InterPro" id="IPR000985">
    <property type="entry name" value="Lectin_LegA_CS"/>
</dbReference>
<dbReference type="InterPro" id="IPR019825">
    <property type="entry name" value="Lectin_legB_Mn/Ca_BS"/>
</dbReference>
<dbReference type="InterPro" id="IPR001220">
    <property type="entry name" value="Legume_lectin_dom"/>
</dbReference>
<dbReference type="InterPro" id="IPR050258">
    <property type="entry name" value="Leguminous_Lectin"/>
</dbReference>
<dbReference type="PANTHER" id="PTHR32401">
    <property type="entry name" value="CONCANAVALIN A-LIKE LECTIN FAMILY PROTEIN"/>
    <property type="match status" value="1"/>
</dbReference>
<dbReference type="PANTHER" id="PTHR32401:SF47">
    <property type="entry name" value="LEGUME LECTIN DOMAIN-CONTAINING PROTEIN"/>
    <property type="match status" value="1"/>
</dbReference>
<dbReference type="Pfam" id="PF00139">
    <property type="entry name" value="Lectin_legB"/>
    <property type="match status" value="2"/>
</dbReference>
<dbReference type="SUPFAM" id="SSF49899">
    <property type="entry name" value="Concanavalin A-like lectins/glucanases"/>
    <property type="match status" value="1"/>
</dbReference>
<dbReference type="PROSITE" id="PS00308">
    <property type="entry name" value="LECTIN_LEGUME_ALPHA"/>
    <property type="match status" value="1"/>
</dbReference>
<dbReference type="PROSITE" id="PS00307">
    <property type="entry name" value="LECTIN_LEGUME_BETA"/>
    <property type="match status" value="1"/>
</dbReference>
<reference key="1">
    <citation type="submission" date="2010-07" db="UniProtKB">
        <authorList>
            <person name="Simoes R.C."/>
            <person name="Delatorre P."/>
            <person name="Marinho E.S."/>
            <person name="Pereira-Junior F.N."/>
            <person name="Silva H.C."/>
            <person name="Gadelha C.A.A."/>
            <person name="Santi-Gadelha T."/>
            <person name="Rocha B.A.M."/>
            <person name="Sampaio A.H."/>
            <person name="Nascimento K.S."/>
            <person name="Cavada B.S."/>
            <person name="Nagano C.S."/>
        </authorList>
    </citation>
    <scope>PROTEIN SEQUENCE</scope>
    <scope>FUNCTION</scope>
    <scope>SUBUNIT</scope>
    <scope>MASS SPECTROMETRY</scope>
    <source>
        <tissue>Seed</tissue>
    </source>
</reference>
<reference key="2">
    <citation type="journal article" date="1999" name="Biochim. Biophys. Acta">
        <title>Molecular characterization and crystallization of Diocleinae lectins.</title>
        <authorList>
            <person name="Calvete J.J."/>
            <person name="Thole H.H."/>
            <person name="Raida M."/>
            <person name="Urbanke C."/>
            <person name="Romero A."/>
            <person name="Grangeiro T.B."/>
            <person name="Ramos M.V."/>
            <person name="Almeida da Rocha I.M."/>
            <person name="Guimaraes F.N."/>
            <person name="Cavada B.S."/>
        </authorList>
    </citation>
    <scope>PROTEIN SEQUENCE OF 1-25 AND 119-143</scope>
    <scope>SUBUNIT</scope>
    <scope>MASS SPECTROMETRY</scope>
    <scope>CRYSTALLIZATION</scope>
    <scope>PRELIMINARY X-RAY CRYSTALLOGRAPHY (2.9 ANGSTROMS)</scope>
    <source>
        <tissue>Seed</tissue>
    </source>
</reference>
<reference key="3">
    <citation type="journal article" date="1992" name="Immunol. Invest.">
        <title>Human lymphocyte stimulation by legume lectins from the Diocleae tribe.</title>
        <authorList>
            <person name="Barral-Netto M."/>
            <person name="Santos S.B."/>
            <person name="Barral A."/>
            <person name="Moreira L.I."/>
            <person name="Santos C.F."/>
            <person name="Moreira R.A."/>
            <person name="Oliveira J.T."/>
            <person name="Cavada B.S."/>
        </authorList>
    </citation>
    <scope>FUNCTION</scope>
</reference>
<reference key="4">
    <citation type="journal article" date="1994" name="Agents Actions">
        <title>Histamine release induced by glucose (mannose)-specific lectins isolated from Brazilian beans. Comparison with concanavalin A.</title>
        <authorList>
            <person name="Gomes J.C."/>
            <person name="Ferreira R.R."/>
            <person name="Cavada B.S."/>
            <person name="Moreira R.A."/>
            <person name="Oliveira J.T."/>
        </authorList>
    </citation>
    <scope>FUNCTION</scope>
    <scope>MANGANESE-BINDING</scope>
</reference>
<reference key="5">
    <citation type="journal article" date="1996" name="Inflamm. Res.">
        <title>Characteristics of the histamine release from hamster cheek pouch mast cells stimulated by lectins from Brazilian beans and concanavalin A.</title>
        <authorList>
            <person name="Ferreira R.R."/>
            <person name="Cavada B.S."/>
            <person name="Moreira R.A."/>
            <person name="Oliveira J.T."/>
            <person name="Gomes J.C."/>
        </authorList>
    </citation>
    <scope>FUNCTION</scope>
    <scope>MANGANESE-BINDING</scope>
</reference>
<reference key="6">
    <citation type="journal article" date="1997" name="Mediators Inflamm.">
        <title>Anti-inflammatory effect of glucose-mannose binding lectins isolated from Brazilian beans.</title>
        <authorList>
            <person name="Assreuy A.M."/>
            <person name="Shibuya M.D."/>
            <person name="Martins G.J."/>
            <person name="De Souza M.L."/>
            <person name="Cavada B.S."/>
            <person name="Moreira R.A."/>
            <person name="Oliveira J.T."/>
            <person name="Ribeiro R.A."/>
            <person name="Flores C.A."/>
        </authorList>
    </citation>
    <scope>FUNCTION</scope>
</reference>
<reference key="7">
    <citation type="journal article" date="1998" name="J. Biol. Chem.">
        <title>Diocleinae lectins are a group of proteins with conserved binding sites for the core trimannoside of asparagine-linked oligosaccharides and differential specificities for complex carbohydrates.</title>
        <authorList>
            <person name="Dam T.K."/>
            <person name="Cavada B.S."/>
            <person name="Grangeiro T.B."/>
            <person name="Santos C.F."/>
            <person name="de Sousa F.A.M."/>
            <person name="Oscarson S."/>
            <person name="Brewer C.F."/>
        </authorList>
    </citation>
    <scope>FUNCTION</scope>
</reference>
<reference key="8">
    <citation type="journal article" date="2000" name="Biochemistry">
        <title>Demonstration of a conserved histidine and two water ligands at the Mn2+ site in Diocleinae lectins by pulsed EPR spectroscopy.</title>
        <authorList>
            <person name="Lee H.C."/>
            <person name="Goroncy A.K."/>
            <person name="Peisach J."/>
            <person name="Cavada B.S."/>
            <person name="Grangeiro T.B."/>
            <person name="Ramos M.V."/>
            <person name="Sampaio A.H."/>
            <person name="Dam T.K."/>
            <person name="Brewer C.F."/>
        </authorList>
    </citation>
    <scope>MANGANESE-BINDING</scope>
</reference>
<reference key="9">
    <citation type="journal article" date="2000" name="J. Biol. Chem.">
        <title>Thermodynamic binding studies of lectins from the diocleinae subtribe to deoxy analogs of the core trimannoside of asparagine-linked oligosaccharides.</title>
        <authorList>
            <person name="Dam T.K."/>
            <person name="Cavada B.S."/>
            <person name="Grangeiro T.B."/>
            <person name="Santos C.F."/>
            <person name="Ceccatto V.M."/>
            <person name="de Sousa F.A."/>
            <person name="Oscarson S."/>
            <person name="Brewer C.F."/>
        </authorList>
    </citation>
    <scope>FUNCTION</scope>
</reference>
<reference key="10">
    <citation type="journal article" date="2010" name="Bioresour. Technol.">
        <title>Toxicity of some glucose/mannose-binding lectins to Biomphalaria glabrata and Artemia salina.</title>
        <authorList>
            <person name="dos Santos A.F."/>
            <person name="Cavada B.S."/>
            <person name="da Rocha B.A."/>
            <person name="do Nascimento K.S."/>
            <person name="Sant'Ana A.E."/>
        </authorList>
    </citation>
    <scope>FUNCTION</scope>
    <scope>TOXIC DOSE</scope>
</reference>
<feature type="chain" id="PRO_0000017593" description="Lectin alpha chain">
    <location>
        <begin position="1"/>
        <end position="237"/>
    </location>
</feature>
<feature type="chain" id="PRO_0000017594" description="Lectin beta chain">
    <location>
        <begin position="1"/>
        <end position="118"/>
    </location>
</feature>
<feature type="chain" id="PRO_0000017595" description="Lectin gamma-1 chain">
    <location>
        <begin position="119"/>
        <end position="237"/>
    </location>
</feature>
<feature type="chain" id="PRO_0000017596" description="Lectin gamma-2 chain">
    <location>
        <begin position="125"/>
        <end position="237"/>
    </location>
</feature>
<feature type="binding site" evidence="1">
    <location>
        <position position="8"/>
    </location>
    <ligand>
        <name>Mn(2+)</name>
        <dbReference type="ChEBI" id="CHEBI:29035"/>
    </ligand>
</feature>
<feature type="binding site" evidence="1">
    <location>
        <position position="10"/>
    </location>
    <ligand>
        <name>Ca(2+)</name>
        <dbReference type="ChEBI" id="CHEBI:29108"/>
    </ligand>
</feature>
<feature type="binding site" evidence="1">
    <location>
        <position position="10"/>
    </location>
    <ligand>
        <name>Mn(2+)</name>
        <dbReference type="ChEBI" id="CHEBI:29035"/>
    </ligand>
</feature>
<feature type="binding site" evidence="1">
    <location>
        <position position="12"/>
    </location>
    <ligand>
        <name>a carbohydrate</name>
        <dbReference type="ChEBI" id="CHEBI:16646"/>
    </ligand>
</feature>
<feature type="binding site" evidence="1">
    <location>
        <position position="12"/>
    </location>
    <ligand>
        <name>Ca(2+)</name>
        <dbReference type="ChEBI" id="CHEBI:29108"/>
    </ligand>
</feature>
<feature type="binding site" evidence="1">
    <location>
        <position position="14"/>
    </location>
    <ligand>
        <name>Ca(2+)</name>
        <dbReference type="ChEBI" id="CHEBI:29108"/>
    </ligand>
</feature>
<feature type="binding site" evidence="1">
    <location>
        <position position="19"/>
    </location>
    <ligand>
        <name>Ca(2+)</name>
        <dbReference type="ChEBI" id="CHEBI:29108"/>
    </ligand>
</feature>
<feature type="binding site" evidence="1">
    <location>
        <position position="19"/>
    </location>
    <ligand>
        <name>Mn(2+)</name>
        <dbReference type="ChEBI" id="CHEBI:29035"/>
    </ligand>
</feature>
<feature type="binding site" evidence="1">
    <location>
        <position position="24"/>
    </location>
    <ligand>
        <name>Mn(2+)</name>
        <dbReference type="ChEBI" id="CHEBI:29035"/>
    </ligand>
</feature>
<feature type="binding site" evidence="1">
    <location>
        <begin position="99"/>
        <end position="100"/>
    </location>
    <ligand>
        <name>a carbohydrate</name>
        <dbReference type="ChEBI" id="CHEBI:16646"/>
    </ligand>
</feature>
<feature type="binding site" evidence="1">
    <location>
        <position position="208"/>
    </location>
    <ligand>
        <name>Ca(2+)</name>
        <dbReference type="ChEBI" id="CHEBI:29108"/>
    </ligand>
</feature>
<feature type="binding site" evidence="1">
    <location>
        <position position="228"/>
    </location>
    <ligand>
        <name>a carbohydrate</name>
        <dbReference type="ChEBI" id="CHEBI:16646"/>
    </ligand>
</feature>
<feature type="strand" evidence="12">
    <location>
        <begin position="4"/>
        <end position="10"/>
    </location>
</feature>
<feature type="helix" evidence="12">
    <location>
        <begin position="15"/>
        <end position="17"/>
    </location>
</feature>
<feature type="strand" evidence="12">
    <location>
        <begin position="24"/>
        <end position="33"/>
    </location>
</feature>
<feature type="strand" evidence="12">
    <location>
        <begin position="35"/>
        <end position="39"/>
    </location>
</feature>
<feature type="strand" evidence="12">
    <location>
        <begin position="46"/>
        <end position="55"/>
    </location>
</feature>
<feature type="turn" evidence="12">
    <location>
        <begin position="56"/>
        <end position="59"/>
    </location>
</feature>
<feature type="strand" evidence="12">
    <location>
        <begin position="60"/>
        <end position="67"/>
    </location>
</feature>
<feature type="turn" evidence="12">
    <location>
        <begin position="68"/>
        <end position="70"/>
    </location>
</feature>
<feature type="strand" evidence="12">
    <location>
        <begin position="71"/>
        <end position="78"/>
    </location>
</feature>
<feature type="helix" evidence="12">
    <location>
        <begin position="81"/>
        <end position="84"/>
    </location>
</feature>
<feature type="strand" evidence="12">
    <location>
        <begin position="87"/>
        <end position="96"/>
    </location>
</feature>
<feature type="strand" evidence="12">
    <location>
        <begin position="105"/>
        <end position="116"/>
    </location>
</feature>
<feature type="strand" evidence="12">
    <location>
        <begin position="124"/>
        <end position="132"/>
    </location>
</feature>
<feature type="strand" evidence="12">
    <location>
        <begin position="140"/>
        <end position="144"/>
    </location>
</feature>
<feature type="strand" evidence="12">
    <location>
        <begin position="154"/>
        <end position="157"/>
    </location>
</feature>
<feature type="strand" evidence="12">
    <location>
        <begin position="170"/>
        <end position="177"/>
    </location>
</feature>
<feature type="strand" evidence="12">
    <location>
        <begin position="187"/>
        <end position="198"/>
    </location>
</feature>
<feature type="strand" evidence="12">
    <location>
        <begin position="202"/>
        <end position="205"/>
    </location>
</feature>
<feature type="strand" evidence="12">
    <location>
        <begin position="209"/>
        <end position="216"/>
    </location>
</feature>
<feature type="helix" evidence="12">
    <location>
        <begin position="227"/>
        <end position="229"/>
    </location>
</feature>
<feature type="turn" evidence="12">
    <location>
        <begin position="230"/>
        <end position="232"/>
    </location>
</feature>
<keyword id="KW-0002">3D-structure</keyword>
<keyword id="KW-0106">Calcium</keyword>
<keyword id="KW-0903">Direct protein sequencing</keyword>
<keyword id="KW-0430">Lectin</keyword>
<keyword id="KW-0464">Manganese</keyword>
<keyword id="KW-0465">Mannose-binding</keyword>
<keyword id="KW-0479">Metal-binding</keyword>
<keyword id="KW-0800">Toxin</keyword>
<keyword id="KW-0926">Vacuole</keyword>
<evidence type="ECO:0000250" key="1"/>
<evidence type="ECO:0000269" key="2">
    <source>
    </source>
</evidence>
<evidence type="ECO:0000269" key="3">
    <source>
    </source>
</evidence>
<evidence type="ECO:0000269" key="4">
    <source>
    </source>
</evidence>
<evidence type="ECO:0000269" key="5">
    <source>
    </source>
</evidence>
<evidence type="ECO:0000269" key="6">
    <source>
    </source>
</evidence>
<evidence type="ECO:0000269" key="7">
    <source>
    </source>
</evidence>
<evidence type="ECO:0000269" key="8">
    <source>
    </source>
</evidence>
<evidence type="ECO:0000269" key="9">
    <source>
    </source>
</evidence>
<evidence type="ECO:0000269" key="10">
    <source ref="1"/>
</evidence>
<evidence type="ECO:0000305" key="11"/>
<evidence type="ECO:0007829" key="12">
    <source>
        <dbReference type="PDB" id="3RS6"/>
    </source>
</evidence>
<accession>P58907</accession>
<protein>
    <recommendedName>
        <fullName>Lectin alpha chain</fullName>
    </recommendedName>
    <component>
        <recommendedName>
            <fullName>Lectin beta chain</fullName>
        </recommendedName>
    </component>
    <component>
        <recommendedName>
            <fullName>Lectin gamma-1 chain</fullName>
        </recommendedName>
    </component>
    <component>
        <recommendedName>
            <fullName>Lectin gamma-2 chain</fullName>
        </recommendedName>
    </component>
</protein>
<comment type="function">
    <text evidence="3 4 5 6 7 8 9 10">D-mannose/D-glucose-binding lectin. Has anti-inflammatory activity in rats. Induces histamine release in mast cells from hamster and rat. Induces lymphocyte proliferation and IFNG production. Shows toxicity against the aquatic snail B.glabrata at concentrations higher than 20 ug/ml.</text>
</comment>
<comment type="subunit">
    <text evidence="2 10">Equilibrium between homodimer and homotetramer. Oligomerization is pH-dependent with homotetramers forming at pH 6.5 and above.</text>
</comment>
<comment type="subcellular location">
    <subcellularLocation>
        <location>Vacuole</location>
        <location>Aleurone grain</location>
    </subcellularLocation>
</comment>
<comment type="tissue specificity">
    <text>Seed.</text>
</comment>
<comment type="PTM">
    <text>The beta and gamma chains are produced by partial proteolytic processing of the lectin alpha chain by an asparaginyl endopeptidase. Mixture of 60% alpha lectin and 40% of its beta and gamma proteolytic fragments.</text>
</comment>
<comment type="mass spectrometry" mass="25412.0" error="2.0" method="Electrospray" evidence="10">
    <molecule>Lectin alpha chain</molecule>
</comment>
<comment type="mass spectrometry" mass="25402.0" error="6.0" method="Electrospray" evidence="2">
    <molecule>Lectin alpha chain</molecule>
</comment>
<comment type="mass spectrometry" mass="12810.0" error="2.0" method="Electrospray" evidence="2">
    <molecule>Lectin beta chain</molecule>
</comment>
<comment type="mass spectrometry" mass="12607.0" error="2.0" method="Electrospray" evidence="2">
    <molecule>Lectin gamma-1 chain</molecule>
</comment>
<comment type="mass spectrometry" mass="12036.0" error="2.0" method="Electrospray" evidence="2">
    <molecule>Lectin gamma-2 chain</molecule>
</comment>
<comment type="toxic dose">
    <text evidence="6">LD(50) is 2.77 ug/ml against the brine shrimp A.salina.</text>
</comment>
<comment type="miscellaneous">
    <text>Binds one manganese (or another transition metal) ion and one calcium ion. The metal ions are essential for the saccharide-binding and cell-agglutinating activities.</text>
</comment>
<comment type="miscellaneous">
    <text>Is being tested as a molluscicide with potential application in controlling schistosomiasis. The causative agent of schistosomiasis depends on freshwater snails of the genus Biomphalaria as hosts during its larval stages.</text>
</comment>
<comment type="similarity">
    <text evidence="11">Belongs to the leguminous lectin family.</text>
</comment>
<proteinExistence type="evidence at protein level"/>
<sequence length="237" mass="25412">ADTIVAVELDSYPNTDIGDPSYPHIGIDIKSVRSKSTARWNMQTGKVGTAHISYNSVAKRLSAVVSYTGSSSTTVSYDVDLNNVLPEWVRVGLSATTGLYKETNTILSWSFTSKLKTNSIADANSLHFSFNQFSQNPKDLILQGDATTDSDGNLQLTRVSSDGSPQGSSVGRALFYAPVHIWEKSAVVASFDATFTFLIKSPDRDPADGITFFIANTDTSIPSGSGGRLLGLFPDAN</sequence>
<organism>
    <name type="scientific">Dioclea virgata</name>
    <dbReference type="NCBI Taxonomy" id="167618"/>
    <lineage>
        <taxon>Eukaryota</taxon>
        <taxon>Viridiplantae</taxon>
        <taxon>Streptophyta</taxon>
        <taxon>Embryophyta</taxon>
        <taxon>Tracheophyta</taxon>
        <taxon>Spermatophyta</taxon>
        <taxon>Magnoliopsida</taxon>
        <taxon>eudicotyledons</taxon>
        <taxon>Gunneridae</taxon>
        <taxon>Pentapetalae</taxon>
        <taxon>rosids</taxon>
        <taxon>fabids</taxon>
        <taxon>Fabales</taxon>
        <taxon>Fabaceae</taxon>
        <taxon>Papilionoideae</taxon>
        <taxon>50 kb inversion clade</taxon>
        <taxon>NPAAA clade</taxon>
        <taxon>indigoferoid/millettioid clade</taxon>
        <taxon>Phaseoleae</taxon>
        <taxon>Dioclea</taxon>
    </lineage>
</organism>